<gene>
    <name evidence="1" type="primary">pdxS</name>
    <name type="ordered locus">SPD_1297</name>
</gene>
<protein>
    <recommendedName>
        <fullName evidence="1">Pyridoxal 5'-phosphate synthase subunit PdxS</fullName>
        <shortName evidence="1">PLP synthase subunit PdxS</shortName>
        <ecNumber evidence="1">4.3.3.6</ecNumber>
    </recommendedName>
    <alternativeName>
        <fullName evidence="1">Pdx1</fullName>
    </alternativeName>
</protein>
<accession>Q04JN5</accession>
<dbReference type="EC" id="4.3.3.6" evidence="1"/>
<dbReference type="EMBL" id="CP000410">
    <property type="protein sequence ID" value="ABJ54048.1"/>
    <property type="molecule type" value="Genomic_DNA"/>
</dbReference>
<dbReference type="RefSeq" id="WP_000138517.1">
    <property type="nucleotide sequence ID" value="NZ_JAMLJR010000005.1"/>
</dbReference>
<dbReference type="SMR" id="Q04JN5"/>
<dbReference type="PaxDb" id="373153-SPD_1297"/>
<dbReference type="GeneID" id="45653282"/>
<dbReference type="KEGG" id="spd:SPD_1297"/>
<dbReference type="eggNOG" id="COG0214">
    <property type="taxonomic scope" value="Bacteria"/>
</dbReference>
<dbReference type="HOGENOM" id="CLU_055352_1_0_9"/>
<dbReference type="BioCyc" id="SPNE373153:G1G6V-1400-MONOMER"/>
<dbReference type="UniPathway" id="UPA00245"/>
<dbReference type="Proteomes" id="UP000001452">
    <property type="component" value="Chromosome"/>
</dbReference>
<dbReference type="GO" id="GO:0036381">
    <property type="term" value="F:pyridoxal 5'-phosphate synthase (glutamine hydrolysing) activity"/>
    <property type="evidence" value="ECO:0007669"/>
    <property type="project" value="UniProtKB-UniRule"/>
</dbReference>
<dbReference type="GO" id="GO:0006520">
    <property type="term" value="P:amino acid metabolic process"/>
    <property type="evidence" value="ECO:0007669"/>
    <property type="project" value="TreeGrafter"/>
</dbReference>
<dbReference type="GO" id="GO:0042823">
    <property type="term" value="P:pyridoxal phosphate biosynthetic process"/>
    <property type="evidence" value="ECO:0007669"/>
    <property type="project" value="UniProtKB-UniRule"/>
</dbReference>
<dbReference type="GO" id="GO:0008615">
    <property type="term" value="P:pyridoxine biosynthetic process"/>
    <property type="evidence" value="ECO:0007669"/>
    <property type="project" value="TreeGrafter"/>
</dbReference>
<dbReference type="CDD" id="cd04727">
    <property type="entry name" value="pdxS"/>
    <property type="match status" value="1"/>
</dbReference>
<dbReference type="FunFam" id="3.20.20.70:FF:000001">
    <property type="entry name" value="Pyridoxine biosynthesis protein PDX1"/>
    <property type="match status" value="1"/>
</dbReference>
<dbReference type="Gene3D" id="3.20.20.70">
    <property type="entry name" value="Aldolase class I"/>
    <property type="match status" value="1"/>
</dbReference>
<dbReference type="HAMAP" id="MF_01824">
    <property type="entry name" value="PdxS"/>
    <property type="match status" value="1"/>
</dbReference>
<dbReference type="InterPro" id="IPR013785">
    <property type="entry name" value="Aldolase_TIM"/>
</dbReference>
<dbReference type="InterPro" id="IPR001852">
    <property type="entry name" value="PdxS/SNZ"/>
</dbReference>
<dbReference type="InterPro" id="IPR033755">
    <property type="entry name" value="PdxS/SNZ_N"/>
</dbReference>
<dbReference type="InterPro" id="IPR011060">
    <property type="entry name" value="RibuloseP-bd_barrel"/>
</dbReference>
<dbReference type="NCBIfam" id="NF003215">
    <property type="entry name" value="PRK04180.1"/>
    <property type="match status" value="1"/>
</dbReference>
<dbReference type="NCBIfam" id="TIGR00343">
    <property type="entry name" value="pyridoxal 5'-phosphate synthase lyase subunit PdxS"/>
    <property type="match status" value="1"/>
</dbReference>
<dbReference type="PANTHER" id="PTHR31829">
    <property type="entry name" value="PYRIDOXAL 5'-PHOSPHATE SYNTHASE SUBUNIT SNZ1-RELATED"/>
    <property type="match status" value="1"/>
</dbReference>
<dbReference type="PANTHER" id="PTHR31829:SF0">
    <property type="entry name" value="PYRIDOXAL 5'-PHOSPHATE SYNTHASE SUBUNIT SNZ1-RELATED"/>
    <property type="match status" value="1"/>
</dbReference>
<dbReference type="Pfam" id="PF01680">
    <property type="entry name" value="SOR_SNZ"/>
    <property type="match status" value="1"/>
</dbReference>
<dbReference type="PIRSF" id="PIRSF029271">
    <property type="entry name" value="Pdx1"/>
    <property type="match status" value="1"/>
</dbReference>
<dbReference type="SUPFAM" id="SSF51366">
    <property type="entry name" value="Ribulose-phoshate binding barrel"/>
    <property type="match status" value="1"/>
</dbReference>
<dbReference type="PROSITE" id="PS01235">
    <property type="entry name" value="PDXS_SNZ_1"/>
    <property type="match status" value="1"/>
</dbReference>
<dbReference type="PROSITE" id="PS51129">
    <property type="entry name" value="PDXS_SNZ_2"/>
    <property type="match status" value="1"/>
</dbReference>
<sequence>MTENRYELNKNLAQMLKGGVIMDVQNPEQARIAEAAGAAAVMALERIPADIRAAGGVSRMSDPKMIKEIQEAVSIPVMAKVRIGHFVEAQILEAIEIDYIDESEVLSPADDRFHVDKKEFQVPFVCGAKDLGEALRRIAEGASMIRTKGEPGTGDIVQAVRHMRMMNQEIRRIQNLREDELYVAAKDLQVPVELVQYVHEHGKLPVVNFAAGGVATPADAALMMQLGAEGVFVGSGIFKSGDPVKRASAIVKAVTNFRNPQILAQISEDLGEAMVGINENEIQILMAERGK</sequence>
<proteinExistence type="inferred from homology"/>
<organism>
    <name type="scientific">Streptococcus pneumoniae serotype 2 (strain D39 / NCTC 7466)</name>
    <dbReference type="NCBI Taxonomy" id="373153"/>
    <lineage>
        <taxon>Bacteria</taxon>
        <taxon>Bacillati</taxon>
        <taxon>Bacillota</taxon>
        <taxon>Bacilli</taxon>
        <taxon>Lactobacillales</taxon>
        <taxon>Streptococcaceae</taxon>
        <taxon>Streptococcus</taxon>
    </lineage>
</organism>
<comment type="function">
    <text evidence="1">Catalyzes the formation of pyridoxal 5'-phosphate from ribose 5-phosphate (RBP), glyceraldehyde 3-phosphate (G3P) and ammonia. The ammonia is provided by the PdxT subunit. Can also use ribulose 5-phosphate and dihydroxyacetone phosphate as substrates, resulting from enzyme-catalyzed isomerization of RBP and G3P, respectively.</text>
</comment>
<comment type="catalytic activity">
    <reaction evidence="1">
        <text>aldehydo-D-ribose 5-phosphate + D-glyceraldehyde 3-phosphate + L-glutamine = pyridoxal 5'-phosphate + L-glutamate + phosphate + 3 H2O + H(+)</text>
        <dbReference type="Rhea" id="RHEA:31507"/>
        <dbReference type="ChEBI" id="CHEBI:15377"/>
        <dbReference type="ChEBI" id="CHEBI:15378"/>
        <dbReference type="ChEBI" id="CHEBI:29985"/>
        <dbReference type="ChEBI" id="CHEBI:43474"/>
        <dbReference type="ChEBI" id="CHEBI:58273"/>
        <dbReference type="ChEBI" id="CHEBI:58359"/>
        <dbReference type="ChEBI" id="CHEBI:59776"/>
        <dbReference type="ChEBI" id="CHEBI:597326"/>
        <dbReference type="EC" id="4.3.3.6"/>
    </reaction>
</comment>
<comment type="pathway">
    <text evidence="1">Cofactor biosynthesis; pyridoxal 5'-phosphate biosynthesis.</text>
</comment>
<comment type="subunit">
    <text evidence="1">In the presence of PdxT, forms a dodecamer of heterodimers.</text>
</comment>
<comment type="similarity">
    <text evidence="1">Belongs to the PdxS/SNZ family.</text>
</comment>
<reference key="1">
    <citation type="journal article" date="2007" name="J. Bacteriol.">
        <title>Genome sequence of Avery's virulent serotype 2 strain D39 of Streptococcus pneumoniae and comparison with that of unencapsulated laboratory strain R6.</title>
        <authorList>
            <person name="Lanie J.A."/>
            <person name="Ng W.-L."/>
            <person name="Kazmierczak K.M."/>
            <person name="Andrzejewski T.M."/>
            <person name="Davidsen T.M."/>
            <person name="Wayne K.J."/>
            <person name="Tettelin H."/>
            <person name="Glass J.I."/>
            <person name="Winkler M.E."/>
        </authorList>
    </citation>
    <scope>NUCLEOTIDE SEQUENCE [LARGE SCALE GENOMIC DNA]</scope>
    <source>
        <strain>D39 / NCTC 7466</strain>
    </source>
</reference>
<evidence type="ECO:0000255" key="1">
    <source>
        <dbReference type="HAMAP-Rule" id="MF_01824"/>
    </source>
</evidence>
<feature type="chain" id="PRO_1000070400" description="Pyridoxal 5'-phosphate synthase subunit PdxS">
    <location>
        <begin position="1"/>
        <end position="291"/>
    </location>
</feature>
<feature type="active site" description="Schiff-base intermediate with D-ribose 5-phosphate" evidence="1">
    <location>
        <position position="80"/>
    </location>
</feature>
<feature type="binding site" evidence="1">
    <location>
        <position position="23"/>
    </location>
    <ligand>
        <name>D-ribose 5-phosphate</name>
        <dbReference type="ChEBI" id="CHEBI:78346"/>
    </ligand>
</feature>
<feature type="binding site" evidence="1">
    <location>
        <position position="152"/>
    </location>
    <ligand>
        <name>D-ribose 5-phosphate</name>
        <dbReference type="ChEBI" id="CHEBI:78346"/>
    </ligand>
</feature>
<feature type="binding site" evidence="1">
    <location>
        <position position="164"/>
    </location>
    <ligand>
        <name>D-glyceraldehyde 3-phosphate</name>
        <dbReference type="ChEBI" id="CHEBI:59776"/>
    </ligand>
</feature>
<feature type="binding site" evidence="1">
    <location>
        <position position="213"/>
    </location>
    <ligand>
        <name>D-ribose 5-phosphate</name>
        <dbReference type="ChEBI" id="CHEBI:78346"/>
    </ligand>
</feature>
<feature type="binding site" evidence="1">
    <location>
        <begin position="234"/>
        <end position="235"/>
    </location>
    <ligand>
        <name>D-ribose 5-phosphate</name>
        <dbReference type="ChEBI" id="CHEBI:78346"/>
    </ligand>
</feature>
<name>PDXS_STRP2</name>
<keyword id="KW-0456">Lyase</keyword>
<keyword id="KW-0663">Pyridoxal phosphate</keyword>
<keyword id="KW-1185">Reference proteome</keyword>
<keyword id="KW-0704">Schiff base</keyword>